<name>SCPB_BACSU</name>
<comment type="function">
    <text>Participates in chromosomal partition during cell division. May act via the formation of a condensin-like complex containing Smc and ScpA that pull DNA away from mid-cell into both cell halves.</text>
</comment>
<comment type="subunit">
    <text>Homodimer. Homodimerization may be required to stabilize the binding of ScpA to the Smc head domains. Component of a cohesin-like complex composed of ScpA, ScpB and the Smc homodimer, in which ScpA and ScpB bind to the head domain of Smc. The presence of the three proteins is required for the association of the complex with DNA.</text>
</comment>
<comment type="interaction">
    <interactant intactId="EBI-2121445">
        <id>P35155</id>
    </interactant>
    <interactant intactId="EBI-2121359">
        <id>P35154</id>
        <label>scpA</label>
    </interactant>
    <organismsDiffer>false</organismsDiffer>
    <experiments>5</experiments>
</comment>
<comment type="interaction">
    <interactant intactId="EBI-2121445">
        <id>P35155</id>
    </interactant>
    <interactant intactId="EBI-2121372">
        <id>P51834</id>
        <label>smc</label>
    </interactant>
    <organismsDiffer>false</organismsDiffer>
    <experiments>2</experiments>
</comment>
<comment type="subcellular location">
    <subcellularLocation>
        <location evidence="1">Cytoplasm</location>
    </subcellularLocation>
    <text>Associated with two foci at the outer edges of the nucleoid region in young cells, and at four foci within both cell halves in older cells.</text>
</comment>
<comment type="similarity">
    <text evidence="2">Belongs to the ScpB family.</text>
</comment>
<dbReference type="EMBL" id="L09228">
    <property type="protein sequence ID" value="AAA67488.1"/>
    <property type="molecule type" value="Genomic_DNA"/>
</dbReference>
<dbReference type="EMBL" id="AL009126">
    <property type="protein sequence ID" value="CAB14253.1"/>
    <property type="molecule type" value="Genomic_DNA"/>
</dbReference>
<dbReference type="PIR" id="S45550">
    <property type="entry name" value="S45550"/>
</dbReference>
<dbReference type="RefSeq" id="WP_003223904.1">
    <property type="nucleotide sequence ID" value="NZ_OZ025638.1"/>
</dbReference>
<dbReference type="SMR" id="P35155"/>
<dbReference type="DIP" id="DIP-52409N"/>
<dbReference type="FunCoup" id="P35155">
    <property type="interactions" value="485"/>
</dbReference>
<dbReference type="IntAct" id="P35155">
    <property type="interactions" value="2"/>
</dbReference>
<dbReference type="STRING" id="224308.BSU23210"/>
<dbReference type="PaxDb" id="224308-BSU23210"/>
<dbReference type="EnsemblBacteria" id="CAB14253">
    <property type="protein sequence ID" value="CAB14253"/>
    <property type="gene ID" value="BSU_23210"/>
</dbReference>
<dbReference type="GeneID" id="76978722"/>
<dbReference type="GeneID" id="938951"/>
<dbReference type="KEGG" id="bsu:BSU23210"/>
<dbReference type="PATRIC" id="fig|224308.179.peg.2528"/>
<dbReference type="eggNOG" id="COG1386">
    <property type="taxonomic scope" value="Bacteria"/>
</dbReference>
<dbReference type="InParanoid" id="P35155"/>
<dbReference type="OrthoDB" id="9806226at2"/>
<dbReference type="PhylomeDB" id="P35155"/>
<dbReference type="BioCyc" id="BSUB:BSU23210-MONOMER"/>
<dbReference type="PRO" id="PR:P35155"/>
<dbReference type="Proteomes" id="UP000001570">
    <property type="component" value="Chromosome"/>
</dbReference>
<dbReference type="GO" id="GO:0005737">
    <property type="term" value="C:cytoplasm"/>
    <property type="evidence" value="ECO:0007669"/>
    <property type="project" value="UniProtKB-SubCell"/>
</dbReference>
<dbReference type="GO" id="GO:0051301">
    <property type="term" value="P:cell division"/>
    <property type="evidence" value="ECO:0007669"/>
    <property type="project" value="UniProtKB-KW"/>
</dbReference>
<dbReference type="GO" id="GO:0051304">
    <property type="term" value="P:chromosome separation"/>
    <property type="evidence" value="ECO:0007669"/>
    <property type="project" value="InterPro"/>
</dbReference>
<dbReference type="GO" id="GO:0006260">
    <property type="term" value="P:DNA replication"/>
    <property type="evidence" value="ECO:0007669"/>
    <property type="project" value="UniProtKB-UniRule"/>
</dbReference>
<dbReference type="Gene3D" id="1.10.10.10">
    <property type="entry name" value="Winged helix-like DNA-binding domain superfamily/Winged helix DNA-binding domain"/>
    <property type="match status" value="2"/>
</dbReference>
<dbReference type="HAMAP" id="MF_01804">
    <property type="entry name" value="ScpB"/>
    <property type="match status" value="1"/>
</dbReference>
<dbReference type="InterPro" id="IPR005234">
    <property type="entry name" value="ScpB_csome_segregation"/>
</dbReference>
<dbReference type="InterPro" id="IPR036388">
    <property type="entry name" value="WH-like_DNA-bd_sf"/>
</dbReference>
<dbReference type="InterPro" id="IPR036390">
    <property type="entry name" value="WH_DNA-bd_sf"/>
</dbReference>
<dbReference type="NCBIfam" id="TIGR00281">
    <property type="entry name" value="SMC-Scp complex subunit ScpB"/>
    <property type="match status" value="1"/>
</dbReference>
<dbReference type="PANTHER" id="PTHR34298">
    <property type="entry name" value="SEGREGATION AND CONDENSATION PROTEIN B"/>
    <property type="match status" value="1"/>
</dbReference>
<dbReference type="PANTHER" id="PTHR34298:SF2">
    <property type="entry name" value="SEGREGATION AND CONDENSATION PROTEIN B"/>
    <property type="match status" value="1"/>
</dbReference>
<dbReference type="Pfam" id="PF04079">
    <property type="entry name" value="SMC_ScpB"/>
    <property type="match status" value="1"/>
</dbReference>
<dbReference type="PIRSF" id="PIRSF019345">
    <property type="entry name" value="ScpB"/>
    <property type="match status" value="1"/>
</dbReference>
<dbReference type="SUPFAM" id="SSF46785">
    <property type="entry name" value="Winged helix' DNA-binding domain"/>
    <property type="match status" value="2"/>
</dbReference>
<evidence type="ECO:0000269" key="1">
    <source>
    </source>
</evidence>
<evidence type="ECO:0000305" key="2"/>
<sequence length="197" mass="22038">MGLDIVNWKAIVEALLYAAGDEGLTKKQLLTVLEIEEPELNTIMADVADEYRGDTRGIELIEYADTYMLSTKKDFAPYLKKLIEVPSKGLSQASLEVLAIVSYKQPITRAEIEEIRGVKSERILHSLVAKALLCEVGRADGPGRAILYGTTPTFLEQFGLKTLDELPPLPENAEEDVLQEEADLFFENFNQTFEDIK</sequence>
<gene>
    <name type="primary">scpB</name>
    <name type="synonym">ypuH</name>
    <name type="ordered locus">BSU23210</name>
</gene>
<keyword id="KW-0131">Cell cycle</keyword>
<keyword id="KW-0132">Cell division</keyword>
<keyword id="KW-0159">Chromosome partition</keyword>
<keyword id="KW-0963">Cytoplasm</keyword>
<keyword id="KW-1185">Reference proteome</keyword>
<accession>P35155</accession>
<organism>
    <name type="scientific">Bacillus subtilis (strain 168)</name>
    <dbReference type="NCBI Taxonomy" id="224308"/>
    <lineage>
        <taxon>Bacteria</taxon>
        <taxon>Bacillati</taxon>
        <taxon>Bacillota</taxon>
        <taxon>Bacilli</taxon>
        <taxon>Bacillales</taxon>
        <taxon>Bacillaceae</taxon>
        <taxon>Bacillus</taxon>
    </lineage>
</organism>
<proteinExistence type="evidence at protein level"/>
<reference key="1">
    <citation type="journal article" date="1993" name="Mol. Microbiol.">
        <title>The organization of the Bacillus subtilis 168 chromosome region between the spoVA and serA genetic loci, based on sequence data.</title>
        <authorList>
            <person name="Sorokin A.V."/>
            <person name="Zumstein E."/>
            <person name="Azevedo V."/>
            <person name="Ehrlich S.D."/>
            <person name="Serror P."/>
        </authorList>
    </citation>
    <scope>NUCLEOTIDE SEQUENCE [GENOMIC DNA]</scope>
    <source>
        <strain>168 / Marburg / ATCC 6051 / DSM 10 / JCM 1465 / NBRC 13719 / NCIMB 3610 / NRRL NRS-744 / VKM B-501</strain>
    </source>
</reference>
<reference key="2">
    <citation type="journal article" date="1997" name="Nature">
        <title>The complete genome sequence of the Gram-positive bacterium Bacillus subtilis.</title>
        <authorList>
            <person name="Kunst F."/>
            <person name="Ogasawara N."/>
            <person name="Moszer I."/>
            <person name="Albertini A.M."/>
            <person name="Alloni G."/>
            <person name="Azevedo V."/>
            <person name="Bertero M.G."/>
            <person name="Bessieres P."/>
            <person name="Bolotin A."/>
            <person name="Borchert S."/>
            <person name="Borriss R."/>
            <person name="Boursier L."/>
            <person name="Brans A."/>
            <person name="Braun M."/>
            <person name="Brignell S.C."/>
            <person name="Bron S."/>
            <person name="Brouillet S."/>
            <person name="Bruschi C.V."/>
            <person name="Caldwell B."/>
            <person name="Capuano V."/>
            <person name="Carter N.M."/>
            <person name="Choi S.-K."/>
            <person name="Codani J.-J."/>
            <person name="Connerton I.F."/>
            <person name="Cummings N.J."/>
            <person name="Daniel R.A."/>
            <person name="Denizot F."/>
            <person name="Devine K.M."/>
            <person name="Duesterhoeft A."/>
            <person name="Ehrlich S.D."/>
            <person name="Emmerson P.T."/>
            <person name="Entian K.-D."/>
            <person name="Errington J."/>
            <person name="Fabret C."/>
            <person name="Ferrari E."/>
            <person name="Foulger D."/>
            <person name="Fritz C."/>
            <person name="Fujita M."/>
            <person name="Fujita Y."/>
            <person name="Fuma S."/>
            <person name="Galizzi A."/>
            <person name="Galleron N."/>
            <person name="Ghim S.-Y."/>
            <person name="Glaser P."/>
            <person name="Goffeau A."/>
            <person name="Golightly E.J."/>
            <person name="Grandi G."/>
            <person name="Guiseppi G."/>
            <person name="Guy B.J."/>
            <person name="Haga K."/>
            <person name="Haiech J."/>
            <person name="Harwood C.R."/>
            <person name="Henaut A."/>
            <person name="Hilbert H."/>
            <person name="Holsappel S."/>
            <person name="Hosono S."/>
            <person name="Hullo M.-F."/>
            <person name="Itaya M."/>
            <person name="Jones L.-M."/>
            <person name="Joris B."/>
            <person name="Karamata D."/>
            <person name="Kasahara Y."/>
            <person name="Klaerr-Blanchard M."/>
            <person name="Klein C."/>
            <person name="Kobayashi Y."/>
            <person name="Koetter P."/>
            <person name="Koningstein G."/>
            <person name="Krogh S."/>
            <person name="Kumano M."/>
            <person name="Kurita K."/>
            <person name="Lapidus A."/>
            <person name="Lardinois S."/>
            <person name="Lauber J."/>
            <person name="Lazarevic V."/>
            <person name="Lee S.-M."/>
            <person name="Levine A."/>
            <person name="Liu H."/>
            <person name="Masuda S."/>
            <person name="Mauel C."/>
            <person name="Medigue C."/>
            <person name="Medina N."/>
            <person name="Mellado R.P."/>
            <person name="Mizuno M."/>
            <person name="Moestl D."/>
            <person name="Nakai S."/>
            <person name="Noback M."/>
            <person name="Noone D."/>
            <person name="O'Reilly M."/>
            <person name="Ogawa K."/>
            <person name="Ogiwara A."/>
            <person name="Oudega B."/>
            <person name="Park S.-H."/>
            <person name="Parro V."/>
            <person name="Pohl T.M."/>
            <person name="Portetelle D."/>
            <person name="Porwollik S."/>
            <person name="Prescott A.M."/>
            <person name="Presecan E."/>
            <person name="Pujic P."/>
            <person name="Purnelle B."/>
            <person name="Rapoport G."/>
            <person name="Rey M."/>
            <person name="Reynolds S."/>
            <person name="Rieger M."/>
            <person name="Rivolta C."/>
            <person name="Rocha E."/>
            <person name="Roche B."/>
            <person name="Rose M."/>
            <person name="Sadaie Y."/>
            <person name="Sato T."/>
            <person name="Scanlan E."/>
            <person name="Schleich S."/>
            <person name="Schroeter R."/>
            <person name="Scoffone F."/>
            <person name="Sekiguchi J."/>
            <person name="Sekowska A."/>
            <person name="Seror S.J."/>
            <person name="Serror P."/>
            <person name="Shin B.-S."/>
            <person name="Soldo B."/>
            <person name="Sorokin A."/>
            <person name="Tacconi E."/>
            <person name="Takagi T."/>
            <person name="Takahashi H."/>
            <person name="Takemaru K."/>
            <person name="Takeuchi M."/>
            <person name="Tamakoshi A."/>
            <person name="Tanaka T."/>
            <person name="Terpstra P."/>
            <person name="Tognoni A."/>
            <person name="Tosato V."/>
            <person name="Uchiyama S."/>
            <person name="Vandenbol M."/>
            <person name="Vannier F."/>
            <person name="Vassarotti A."/>
            <person name="Viari A."/>
            <person name="Wambutt R."/>
            <person name="Wedler E."/>
            <person name="Wedler H."/>
            <person name="Weitzenegger T."/>
            <person name="Winters P."/>
            <person name="Wipat A."/>
            <person name="Yamamoto H."/>
            <person name="Yamane K."/>
            <person name="Yasumoto K."/>
            <person name="Yata K."/>
            <person name="Yoshida K."/>
            <person name="Yoshikawa H.-F."/>
            <person name="Zumstein E."/>
            <person name="Yoshikawa H."/>
            <person name="Danchin A."/>
        </authorList>
    </citation>
    <scope>NUCLEOTIDE SEQUENCE [LARGE SCALE GENOMIC DNA]</scope>
    <source>
        <strain>168</strain>
    </source>
</reference>
<reference key="3">
    <citation type="journal article" date="2002" name="EMBO J.">
        <title>Cell cycle-dependent localization of two novel prokaryotic chromosome segregation and condensation proteins in Bacillus subtilis that interact with SMC protein.</title>
        <authorList>
            <person name="Mascarenhas J."/>
            <person name="Soppa J."/>
            <person name="Strunnikov A.V."/>
            <person name="Graumann P.L."/>
        </authorList>
    </citation>
    <scope>INTERACTION WITH SCPA AND SMC</scope>
</reference>
<reference key="4">
    <citation type="journal article" date="2002" name="Mol. Microbiol.">
        <title>Discovery of two novel families of proteins that are proposed to interact with prokaryotic SMC proteins, and characterization of the Bacillus subtilis family members ScpA and ScpB.</title>
        <authorList>
            <person name="Soppa J."/>
            <person name="Kobayashi K."/>
            <person name="Noirot-Gros M.-F."/>
            <person name="Oesterhelt D."/>
            <person name="Ehrlich S.D."/>
            <person name="Dervyn E."/>
            <person name="Ogasawara N."/>
            <person name="Moriya S."/>
        </authorList>
    </citation>
    <scope>CHARACTERIZATION</scope>
</reference>
<reference key="5">
    <citation type="journal article" date="2003" name="Mol. Cell. Biol.">
        <title>A prokaryotic condensin/cohesin-like complex can actively compact chromosomes from a single position on the nucleoid and binds to DNA as a ring-like structure.</title>
        <authorList>
            <person name="Volkov A."/>
            <person name="Mascarenhas J."/>
            <person name="Andrei-Selmer C."/>
            <person name="Ulrich H.D."/>
            <person name="Graumann P.L."/>
        </authorList>
    </citation>
    <scope>SUBCELLULAR LOCATION</scope>
    <scope>HOMODIMERIZATION</scope>
    <scope>INTERACTION WITH SMC AND SCPA</scope>
</reference>
<feature type="chain" id="PRO_0000211127" description="Segregation and condensation protein B">
    <location>
        <begin position="1"/>
        <end position="197"/>
    </location>
</feature>
<protein>
    <recommendedName>
        <fullName>Segregation and condensation protein B</fullName>
    </recommendedName>
</protein>